<organism>
    <name type="scientific">Nitrobacter hamburgensis (strain DSM 10229 / NCIMB 13809 / X14)</name>
    <dbReference type="NCBI Taxonomy" id="323097"/>
    <lineage>
        <taxon>Bacteria</taxon>
        <taxon>Pseudomonadati</taxon>
        <taxon>Pseudomonadota</taxon>
        <taxon>Alphaproteobacteria</taxon>
        <taxon>Hyphomicrobiales</taxon>
        <taxon>Nitrobacteraceae</taxon>
        <taxon>Nitrobacter</taxon>
    </lineage>
</organism>
<protein>
    <recommendedName>
        <fullName evidence="1">ATP-dependent protease subunit HslV</fullName>
        <ecNumber evidence="1">3.4.25.2</ecNumber>
    </recommendedName>
</protein>
<comment type="function">
    <text evidence="1">Protease subunit of a proteasome-like degradation complex believed to be a general protein degrading machinery.</text>
</comment>
<comment type="catalytic activity">
    <reaction evidence="1">
        <text>ATP-dependent cleavage of peptide bonds with broad specificity.</text>
        <dbReference type="EC" id="3.4.25.2"/>
    </reaction>
</comment>
<comment type="activity regulation">
    <text evidence="1">Allosterically activated by HslU binding.</text>
</comment>
<comment type="subunit">
    <text evidence="1">A double ring-shaped homohexamer of HslV is capped on each side by a ring-shaped HslU homohexamer. The assembly of the HslU/HslV complex is dependent on binding of ATP.</text>
</comment>
<comment type="subcellular location">
    <subcellularLocation>
        <location evidence="1">Cytoplasm</location>
    </subcellularLocation>
</comment>
<comment type="similarity">
    <text evidence="1">Belongs to the peptidase T1B family. HslV subfamily.</text>
</comment>
<evidence type="ECO:0000255" key="1">
    <source>
        <dbReference type="HAMAP-Rule" id="MF_00248"/>
    </source>
</evidence>
<dbReference type="EC" id="3.4.25.2" evidence="1"/>
<dbReference type="EMBL" id="CP000319">
    <property type="protein sequence ID" value="ABE61022.1"/>
    <property type="molecule type" value="Genomic_DNA"/>
</dbReference>
<dbReference type="RefSeq" id="WP_011508729.1">
    <property type="nucleotide sequence ID" value="NC_007964.1"/>
</dbReference>
<dbReference type="SMR" id="Q1QRX5"/>
<dbReference type="STRING" id="323097.Nham_0121"/>
<dbReference type="MEROPS" id="T01.006"/>
<dbReference type="KEGG" id="nha:Nham_0121"/>
<dbReference type="eggNOG" id="COG5405">
    <property type="taxonomic scope" value="Bacteria"/>
</dbReference>
<dbReference type="HOGENOM" id="CLU_093872_1_0_5"/>
<dbReference type="OrthoDB" id="9804884at2"/>
<dbReference type="Proteomes" id="UP000001953">
    <property type="component" value="Chromosome"/>
</dbReference>
<dbReference type="GO" id="GO:0009376">
    <property type="term" value="C:HslUV protease complex"/>
    <property type="evidence" value="ECO:0007669"/>
    <property type="project" value="UniProtKB-UniRule"/>
</dbReference>
<dbReference type="GO" id="GO:0005839">
    <property type="term" value="C:proteasome core complex"/>
    <property type="evidence" value="ECO:0007669"/>
    <property type="project" value="InterPro"/>
</dbReference>
<dbReference type="GO" id="GO:0046872">
    <property type="term" value="F:metal ion binding"/>
    <property type="evidence" value="ECO:0007669"/>
    <property type="project" value="UniProtKB-KW"/>
</dbReference>
<dbReference type="GO" id="GO:0004298">
    <property type="term" value="F:threonine-type endopeptidase activity"/>
    <property type="evidence" value="ECO:0007669"/>
    <property type="project" value="UniProtKB-KW"/>
</dbReference>
<dbReference type="GO" id="GO:0051603">
    <property type="term" value="P:proteolysis involved in protein catabolic process"/>
    <property type="evidence" value="ECO:0007669"/>
    <property type="project" value="InterPro"/>
</dbReference>
<dbReference type="CDD" id="cd01913">
    <property type="entry name" value="protease_HslV"/>
    <property type="match status" value="1"/>
</dbReference>
<dbReference type="FunFam" id="3.60.20.10:FF:000002">
    <property type="entry name" value="ATP-dependent protease subunit HslV"/>
    <property type="match status" value="1"/>
</dbReference>
<dbReference type="Gene3D" id="3.60.20.10">
    <property type="entry name" value="Glutamine Phosphoribosylpyrophosphate, subunit 1, domain 1"/>
    <property type="match status" value="1"/>
</dbReference>
<dbReference type="HAMAP" id="MF_00248">
    <property type="entry name" value="HslV"/>
    <property type="match status" value="1"/>
</dbReference>
<dbReference type="InterPro" id="IPR022281">
    <property type="entry name" value="ATP-dep_Prtase_HsIV_su"/>
</dbReference>
<dbReference type="InterPro" id="IPR029055">
    <property type="entry name" value="Ntn_hydrolases_N"/>
</dbReference>
<dbReference type="InterPro" id="IPR001353">
    <property type="entry name" value="Proteasome_sua/b"/>
</dbReference>
<dbReference type="InterPro" id="IPR023333">
    <property type="entry name" value="Proteasome_suB-type"/>
</dbReference>
<dbReference type="NCBIfam" id="TIGR03692">
    <property type="entry name" value="ATP_dep_HslV"/>
    <property type="match status" value="1"/>
</dbReference>
<dbReference type="NCBIfam" id="NF003964">
    <property type="entry name" value="PRK05456.1"/>
    <property type="match status" value="1"/>
</dbReference>
<dbReference type="PANTHER" id="PTHR32194:SF7">
    <property type="entry name" value="ATP-DEPENDENT PROTEASE SUBUNIT HSLV"/>
    <property type="match status" value="1"/>
</dbReference>
<dbReference type="PANTHER" id="PTHR32194">
    <property type="entry name" value="METALLOPROTEASE TLDD"/>
    <property type="match status" value="1"/>
</dbReference>
<dbReference type="Pfam" id="PF00227">
    <property type="entry name" value="Proteasome"/>
    <property type="match status" value="1"/>
</dbReference>
<dbReference type="PIRSF" id="PIRSF039093">
    <property type="entry name" value="HslV"/>
    <property type="match status" value="1"/>
</dbReference>
<dbReference type="SUPFAM" id="SSF56235">
    <property type="entry name" value="N-terminal nucleophile aminohydrolases (Ntn hydrolases)"/>
    <property type="match status" value="1"/>
</dbReference>
<dbReference type="PROSITE" id="PS51476">
    <property type="entry name" value="PROTEASOME_BETA_2"/>
    <property type="match status" value="1"/>
</dbReference>
<name>HSLV_NITHX</name>
<reference key="1">
    <citation type="submission" date="2006-03" db="EMBL/GenBank/DDBJ databases">
        <title>Complete sequence of chromosome of Nitrobacter hamburgensis X14.</title>
        <authorList>
            <consortium name="US DOE Joint Genome Institute"/>
            <person name="Copeland A."/>
            <person name="Lucas S."/>
            <person name="Lapidus A."/>
            <person name="Barry K."/>
            <person name="Detter J.C."/>
            <person name="Glavina del Rio T."/>
            <person name="Hammon N."/>
            <person name="Israni S."/>
            <person name="Dalin E."/>
            <person name="Tice H."/>
            <person name="Pitluck S."/>
            <person name="Chain P."/>
            <person name="Malfatti S."/>
            <person name="Shin M."/>
            <person name="Vergez L."/>
            <person name="Schmutz J."/>
            <person name="Larimer F."/>
            <person name="Land M."/>
            <person name="Hauser L."/>
            <person name="Kyrpides N."/>
            <person name="Ivanova N."/>
            <person name="Ward B."/>
            <person name="Arp D."/>
            <person name="Klotz M."/>
            <person name="Stein L."/>
            <person name="O'Mullan G."/>
            <person name="Starkenburg S."/>
            <person name="Sayavedra L."/>
            <person name="Poret-Peterson A.T."/>
            <person name="Gentry M.E."/>
            <person name="Bruce D."/>
            <person name="Richardson P."/>
        </authorList>
    </citation>
    <scope>NUCLEOTIDE SEQUENCE [LARGE SCALE GENOMIC DNA]</scope>
    <source>
        <strain>DSM 10229 / NCIMB 13809 / X14</strain>
    </source>
</reference>
<feature type="chain" id="PRO_1000012638" description="ATP-dependent protease subunit HslV">
    <location>
        <begin position="1"/>
        <end position="184"/>
    </location>
</feature>
<feature type="active site" evidence="1">
    <location>
        <position position="12"/>
    </location>
</feature>
<feature type="binding site" evidence="1">
    <location>
        <position position="166"/>
    </location>
    <ligand>
        <name>Na(+)</name>
        <dbReference type="ChEBI" id="CHEBI:29101"/>
    </ligand>
</feature>
<feature type="binding site" evidence="1">
    <location>
        <position position="169"/>
    </location>
    <ligand>
        <name>Na(+)</name>
        <dbReference type="ChEBI" id="CHEBI:29101"/>
    </ligand>
</feature>
<feature type="binding site" evidence="1">
    <location>
        <position position="172"/>
    </location>
    <ligand>
        <name>Na(+)</name>
        <dbReference type="ChEBI" id="CHEBI:29101"/>
    </ligand>
</feature>
<accession>Q1QRX5</accession>
<proteinExistence type="inferred from homology"/>
<gene>
    <name evidence="1" type="primary">hslV</name>
    <name type="ordered locus">Nham_0121</name>
</gene>
<sequence length="184" mass="19714">MQASQPEVWHGTTILTVRKGGKVVIGGDGQVSIGQTVIKSNAKKVRKLGKGDVIGGFAGATADAFTLFERLESKLEQYPGQLTRAAVELAKDWRTDRYLRRLEAMMLVADKDVSLVLTGTGDVLEPEAGVMAIGSGGNYALSAARALIDSDKDAETIVRRSLDIAADICVYTNRNLTIETLSTD</sequence>
<keyword id="KW-0021">Allosteric enzyme</keyword>
<keyword id="KW-0963">Cytoplasm</keyword>
<keyword id="KW-0378">Hydrolase</keyword>
<keyword id="KW-0479">Metal-binding</keyword>
<keyword id="KW-0645">Protease</keyword>
<keyword id="KW-1185">Reference proteome</keyword>
<keyword id="KW-0915">Sodium</keyword>
<keyword id="KW-0888">Threonine protease</keyword>